<comment type="function">
    <text evidence="3">Translocates aromatic and neutral amino acids such as tyrosine, tryptophan, phenylalanine, histidine, proline, leucine, valine, glutamine, as well as arginine. Transports the auxins indole-3-acetic acid (IAA) and 2,4-dichlorophenoxyacetic acid (2,4-D).</text>
</comment>
<comment type="biophysicochemical properties">
    <kinetics>
        <KM evidence="3">163 uM for leucine</KM>
        <KM evidence="3">240 uM for tyrosine</KM>
    </kinetics>
</comment>
<comment type="subcellular location">
    <subcellularLocation>
        <location evidence="4">Endoplasmic reticulum membrane</location>
        <topology evidence="1">Multi-pass membrane protein</topology>
    </subcellularLocation>
</comment>
<comment type="tissue specificity">
    <text evidence="3 4">Ubiquitous (PubMed:27925655). Highly expressed in flowers and cauline leaves and at lower levels in stems, leaves and roots (PubMed:11299361).</text>
</comment>
<comment type="similarity">
    <text evidence="7">Belongs to the amino acid/polyamine transporter 2 family. Amino acid/auxin permease (AAAP) (TC 2.A.18.8) subfamily.</text>
</comment>
<comment type="sequence caution" evidence="7">
    <conflict type="miscellaneous discrepancy">
        <sequence resource="EMBL-CDS" id="AAB82307"/>
    </conflict>
    <text>Sequencing errors.</text>
</comment>
<dbReference type="EMBL" id="U39783">
    <property type="protein sequence ID" value="AAB82307.1"/>
    <property type="status" value="ALT_SEQ"/>
    <property type="molecule type" value="mRNA"/>
</dbReference>
<dbReference type="EMBL" id="AC016795">
    <property type="protein sequence ID" value="AAF23206.1"/>
    <property type="molecule type" value="Genomic_DNA"/>
</dbReference>
<dbReference type="EMBL" id="CP002686">
    <property type="protein sequence ID" value="AEE75115.1"/>
    <property type="molecule type" value="Genomic_DNA"/>
</dbReference>
<dbReference type="EMBL" id="CP002686">
    <property type="protein sequence ID" value="ANM65575.1"/>
    <property type="molecule type" value="Genomic_DNA"/>
</dbReference>
<dbReference type="EMBL" id="BT008302">
    <property type="protein sequence ID" value="AAP37661.1"/>
    <property type="molecule type" value="mRNA"/>
</dbReference>
<dbReference type="EMBL" id="AK227614">
    <property type="protein sequence ID" value="BAE99605.1"/>
    <property type="molecule type" value="mRNA"/>
</dbReference>
<dbReference type="RefSeq" id="NP_001327533.1">
    <property type="nucleotide sequence ID" value="NM_001337960.1"/>
</dbReference>
<dbReference type="RefSeq" id="NP_187796.1">
    <property type="nucleotide sequence ID" value="NM_112023.2"/>
</dbReference>
<dbReference type="SMR" id="Q9SF09"/>
<dbReference type="FunCoup" id="Q9SF09">
    <property type="interactions" value="776"/>
</dbReference>
<dbReference type="IntAct" id="Q9SF09">
    <property type="interactions" value="1"/>
</dbReference>
<dbReference type="STRING" id="3702.Q9SF09"/>
<dbReference type="iPTMnet" id="Q9SF09"/>
<dbReference type="PaxDb" id="3702-AT3G11900.1"/>
<dbReference type="ProteomicsDB" id="244481"/>
<dbReference type="EnsemblPlants" id="AT3G11900.1">
    <property type="protein sequence ID" value="AT3G11900.1"/>
    <property type="gene ID" value="AT3G11900"/>
</dbReference>
<dbReference type="EnsemblPlants" id="AT3G11900.2">
    <property type="protein sequence ID" value="AT3G11900.2"/>
    <property type="gene ID" value="AT3G11900"/>
</dbReference>
<dbReference type="GeneID" id="820363"/>
<dbReference type="Gramene" id="AT3G11900.1">
    <property type="protein sequence ID" value="AT3G11900.1"/>
    <property type="gene ID" value="AT3G11900"/>
</dbReference>
<dbReference type="Gramene" id="AT3G11900.2">
    <property type="protein sequence ID" value="AT3G11900.2"/>
    <property type="gene ID" value="AT3G11900"/>
</dbReference>
<dbReference type="KEGG" id="ath:AT3G11900"/>
<dbReference type="Araport" id="AT3G11900"/>
<dbReference type="TAIR" id="AT3G11900">
    <property type="gene designation" value="ANT1"/>
</dbReference>
<dbReference type="eggNOG" id="KOG1304">
    <property type="taxonomic scope" value="Eukaryota"/>
</dbReference>
<dbReference type="HOGENOM" id="CLU_009646_6_0_1"/>
<dbReference type="InParanoid" id="Q9SF09"/>
<dbReference type="OMA" id="WIRNISK"/>
<dbReference type="OrthoDB" id="1684102at2759"/>
<dbReference type="PhylomeDB" id="Q9SF09"/>
<dbReference type="SABIO-RK" id="Q9SF09"/>
<dbReference type="PRO" id="PR:Q9SF09"/>
<dbReference type="Proteomes" id="UP000006548">
    <property type="component" value="Chromosome 3"/>
</dbReference>
<dbReference type="ExpressionAtlas" id="Q9SF09">
    <property type="expression patterns" value="baseline and differential"/>
</dbReference>
<dbReference type="GO" id="GO:0005789">
    <property type="term" value="C:endoplasmic reticulum membrane"/>
    <property type="evidence" value="ECO:0000314"/>
    <property type="project" value="UniProtKB"/>
</dbReference>
<dbReference type="GO" id="GO:0016020">
    <property type="term" value="C:membrane"/>
    <property type="evidence" value="ECO:0000250"/>
    <property type="project" value="TAIR"/>
</dbReference>
<dbReference type="GO" id="GO:0015173">
    <property type="term" value="F:aromatic amino acid transmembrane transporter activity"/>
    <property type="evidence" value="ECO:0000315"/>
    <property type="project" value="TAIR"/>
</dbReference>
<dbReference type="GO" id="GO:0015175">
    <property type="term" value="F:neutral L-amino acid transmembrane transporter activity"/>
    <property type="evidence" value="ECO:0000315"/>
    <property type="project" value="TAIR"/>
</dbReference>
<dbReference type="GO" id="GO:0009624">
    <property type="term" value="P:response to nematode"/>
    <property type="evidence" value="ECO:0007007"/>
    <property type="project" value="TAIR"/>
</dbReference>
<dbReference type="InterPro" id="IPR013057">
    <property type="entry name" value="AA_transpt_TM"/>
</dbReference>
<dbReference type="PANTHER" id="PTHR22950">
    <property type="entry name" value="AMINO ACID TRANSPORTER"/>
    <property type="match status" value="1"/>
</dbReference>
<dbReference type="PANTHER" id="PTHR22950:SF349">
    <property type="entry name" value="AMINO ACID TRANSPORTER TRANSMEMBRANE DOMAIN-CONTAINING PROTEIN"/>
    <property type="match status" value="1"/>
</dbReference>
<dbReference type="Pfam" id="PF01490">
    <property type="entry name" value="Aa_trans"/>
    <property type="match status" value="1"/>
</dbReference>
<evidence type="ECO:0000255" key="1"/>
<evidence type="ECO:0000256" key="2">
    <source>
        <dbReference type="SAM" id="MobiDB-lite"/>
    </source>
</evidence>
<evidence type="ECO:0000269" key="3">
    <source>
    </source>
</evidence>
<evidence type="ECO:0000269" key="4">
    <source>
    </source>
</evidence>
<evidence type="ECO:0000303" key="5">
    <source>
    </source>
</evidence>
<evidence type="ECO:0000303" key="6">
    <source>
    </source>
</evidence>
<evidence type="ECO:0000305" key="7"/>
<evidence type="ECO:0000312" key="8">
    <source>
        <dbReference type="Araport" id="AT3G11900"/>
    </source>
</evidence>
<evidence type="ECO:0000312" key="9">
    <source>
        <dbReference type="EMBL" id="AAF23206.1"/>
    </source>
</evidence>
<gene>
    <name evidence="5 6" type="primary">ANT1</name>
    <name evidence="8" type="ordered locus">At3g11900</name>
    <name evidence="9" type="ORF">F26K24.19</name>
</gene>
<keyword id="KW-0029">Amino-acid transport</keyword>
<keyword id="KW-0256">Endoplasmic reticulum</keyword>
<keyword id="KW-0472">Membrane</keyword>
<keyword id="KW-1185">Reference proteome</keyword>
<keyword id="KW-0812">Transmembrane</keyword>
<keyword id="KW-1133">Transmembrane helix</keyword>
<keyword id="KW-0813">Transport</keyword>
<proteinExistence type="evidence at protein level"/>
<accession>Q9SF09</accession>
<accession>O24406</accession>
<name>ANT1_ARATH</name>
<organism>
    <name type="scientific">Arabidopsis thaliana</name>
    <name type="common">Mouse-ear cress</name>
    <dbReference type="NCBI Taxonomy" id="3702"/>
    <lineage>
        <taxon>Eukaryota</taxon>
        <taxon>Viridiplantae</taxon>
        <taxon>Streptophyta</taxon>
        <taxon>Embryophyta</taxon>
        <taxon>Tracheophyta</taxon>
        <taxon>Spermatophyta</taxon>
        <taxon>Magnoliopsida</taxon>
        <taxon>eudicotyledons</taxon>
        <taxon>Gunneridae</taxon>
        <taxon>Pentapetalae</taxon>
        <taxon>rosids</taxon>
        <taxon>malvids</taxon>
        <taxon>Brassicales</taxon>
        <taxon>Brassicaceae</taxon>
        <taxon>Camelineae</taxon>
        <taxon>Arabidopsis</taxon>
    </lineage>
</organism>
<sequence>MAIKDLTATTGDSSLPLIKSPPSETTGGDRTSALQTLGNIIVSIVGTGVLGLPYAFRIAGWLAGSLGVIIVGFATYYCMLLLIQCRDKLESEEGEEESKTYGDLGFKCMGTKGRYLTEFLIFTAQCGGSVAYLVFIGRNLSSIFSSYGLSMVSFILILVPIEVGLSWITSLSALSPFSIFADICNIIAMCFVVKENVEMVIEGDFSFSDRTAISSTIGGLPFAGGVAVFCFEGFAMTLALESSMREREAFPKLLAKVLAGITFVYVLFGFCGYMAYGDQTKDIITLNLPNNWSAIAVQIGLCVGLTFTFPIMVHPLNEIIEQKLKRIDWLQKHHNGYSNETGSVSKFAIFTTRTLLVVGLAAIASLVPGFGTFASLVGSTLCALISFVLPASYHLTLLGPSLNVWNKSIDVFIVICGLIFAVYGTYNTIVGV</sequence>
<feature type="chain" id="PRO_0000433105" description="Amino acid transporter ANT1">
    <location>
        <begin position="1"/>
        <end position="432"/>
    </location>
</feature>
<feature type="topological domain" description="Cytoplasmic" evidence="7">
    <location>
        <begin position="1"/>
        <end position="35"/>
    </location>
</feature>
<feature type="transmembrane region" description="Helical; Name=1" evidence="1">
    <location>
        <begin position="36"/>
        <end position="56"/>
    </location>
</feature>
<feature type="topological domain" description="Lumenal" evidence="7">
    <location>
        <begin position="57"/>
        <end position="62"/>
    </location>
</feature>
<feature type="transmembrane region" description="Helical; Name=2" evidence="1">
    <location>
        <begin position="63"/>
        <end position="83"/>
    </location>
</feature>
<feature type="topological domain" description="Cytoplasmic" evidence="7">
    <location>
        <begin position="84"/>
        <end position="115"/>
    </location>
</feature>
<feature type="transmembrane region" description="Helical; Name=3" evidence="1">
    <location>
        <begin position="116"/>
        <end position="136"/>
    </location>
</feature>
<feature type="topological domain" description="Lumenal" evidence="7">
    <location>
        <begin position="137"/>
        <end position="147"/>
    </location>
</feature>
<feature type="transmembrane region" description="Helical; Name=4" evidence="1">
    <location>
        <begin position="148"/>
        <end position="168"/>
    </location>
</feature>
<feature type="topological domain" description="Cytoplasmic" evidence="7">
    <location>
        <begin position="169"/>
        <end position="172"/>
    </location>
</feature>
<feature type="transmembrane region" description="Helical; Name=5" evidence="1">
    <location>
        <begin position="173"/>
        <end position="193"/>
    </location>
</feature>
<feature type="topological domain" description="Lumenal" evidence="7">
    <location>
        <begin position="194"/>
        <end position="219"/>
    </location>
</feature>
<feature type="transmembrane region" description="Helical; Name=6" evidence="1">
    <location>
        <begin position="220"/>
        <end position="240"/>
    </location>
</feature>
<feature type="topological domain" description="Cytoplasmic" evidence="7">
    <location>
        <begin position="241"/>
        <end position="256"/>
    </location>
</feature>
<feature type="transmembrane region" description="Helical; Name=7" evidence="1">
    <location>
        <begin position="257"/>
        <end position="277"/>
    </location>
</feature>
<feature type="topological domain" description="Lumenal" evidence="7">
    <location>
        <begin position="278"/>
        <end position="292"/>
    </location>
</feature>
<feature type="transmembrane region" description="Helical; Name=8" evidence="1">
    <location>
        <begin position="293"/>
        <end position="313"/>
    </location>
</feature>
<feature type="topological domain" description="Cytoplasmic" evidence="7">
    <location>
        <begin position="314"/>
        <end position="353"/>
    </location>
</feature>
<feature type="transmembrane region" description="Helical; Name=9" evidence="1">
    <location>
        <begin position="354"/>
        <end position="374"/>
    </location>
</feature>
<feature type="topological domain" description="Lumenal" evidence="7">
    <location>
        <begin position="375"/>
        <end position="379"/>
    </location>
</feature>
<feature type="transmembrane region" description="Helical; Name=10" evidence="1">
    <location>
        <begin position="380"/>
        <end position="400"/>
    </location>
</feature>
<feature type="topological domain" description="Cytoplasmic" evidence="7">
    <location>
        <begin position="401"/>
        <end position="410"/>
    </location>
</feature>
<feature type="transmembrane region" description="Helical; Name=11" evidence="1">
    <location>
        <begin position="411"/>
        <end position="431"/>
    </location>
</feature>
<feature type="topological domain" description="Lumenal" evidence="7">
    <location>
        <position position="432"/>
    </location>
</feature>
<feature type="region of interest" description="Disordered" evidence="2">
    <location>
        <begin position="1"/>
        <end position="30"/>
    </location>
</feature>
<feature type="sequence conflict" description="In Ref. 1; AAB82307." evidence="7" ref="1">
    <original>G</original>
    <variation>S</variation>
    <location>
        <position position="219"/>
    </location>
</feature>
<feature type="sequence conflict" description="In Ref. 1; AAB82307." evidence="7" ref="1">
    <original>M</original>
    <variation>I</variation>
    <location>
        <position position="244"/>
    </location>
</feature>
<feature type="sequence conflict" description="In Ref. 1; AAB82307." evidence="7" ref="1">
    <original>D</original>
    <variation>N</variation>
    <location>
        <position position="282"/>
    </location>
</feature>
<protein>
    <recommendedName>
        <fullName evidence="7">Amino acid transporter ANT1</fullName>
    </recommendedName>
    <alternativeName>
        <fullName evidence="5">Aromatic and neutral amino acid transporter 1</fullName>
    </alternativeName>
</protein>
<reference key="1">
    <citation type="submission" date="1995-10" db="EMBL/GenBank/DDBJ databases">
        <title>Arabidopsis thaliana amino acid transport protein mRNA.</title>
        <authorList>
            <person name="Chen L."/>
            <person name="Bush D.R."/>
        </authorList>
    </citation>
    <scope>NUCLEOTIDE SEQUENCE [MRNA]</scope>
</reference>
<reference key="2">
    <citation type="journal article" date="2000" name="Nature">
        <title>Sequence and analysis of chromosome 3 of the plant Arabidopsis thaliana.</title>
        <authorList>
            <person name="Salanoubat M."/>
            <person name="Lemcke K."/>
            <person name="Rieger M."/>
            <person name="Ansorge W."/>
            <person name="Unseld M."/>
            <person name="Fartmann B."/>
            <person name="Valle G."/>
            <person name="Bloecker H."/>
            <person name="Perez-Alonso M."/>
            <person name="Obermaier B."/>
            <person name="Delseny M."/>
            <person name="Boutry M."/>
            <person name="Grivell L.A."/>
            <person name="Mache R."/>
            <person name="Puigdomenech P."/>
            <person name="De Simone V."/>
            <person name="Choisne N."/>
            <person name="Artiguenave F."/>
            <person name="Robert C."/>
            <person name="Brottier P."/>
            <person name="Wincker P."/>
            <person name="Cattolico L."/>
            <person name="Weissenbach J."/>
            <person name="Saurin W."/>
            <person name="Quetier F."/>
            <person name="Schaefer M."/>
            <person name="Mueller-Auer S."/>
            <person name="Gabel C."/>
            <person name="Fuchs M."/>
            <person name="Benes V."/>
            <person name="Wurmbach E."/>
            <person name="Drzonek H."/>
            <person name="Erfle H."/>
            <person name="Jordan N."/>
            <person name="Bangert S."/>
            <person name="Wiedelmann R."/>
            <person name="Kranz H."/>
            <person name="Voss H."/>
            <person name="Holland R."/>
            <person name="Brandt P."/>
            <person name="Nyakatura G."/>
            <person name="Vezzi A."/>
            <person name="D'Angelo M."/>
            <person name="Pallavicini A."/>
            <person name="Toppo S."/>
            <person name="Simionati B."/>
            <person name="Conrad A."/>
            <person name="Hornischer K."/>
            <person name="Kauer G."/>
            <person name="Loehnert T.-H."/>
            <person name="Nordsiek G."/>
            <person name="Reichelt J."/>
            <person name="Scharfe M."/>
            <person name="Schoen O."/>
            <person name="Bargues M."/>
            <person name="Terol J."/>
            <person name="Climent J."/>
            <person name="Navarro P."/>
            <person name="Collado C."/>
            <person name="Perez-Perez A."/>
            <person name="Ottenwaelder B."/>
            <person name="Duchemin D."/>
            <person name="Cooke R."/>
            <person name="Laudie M."/>
            <person name="Berger-Llauro C."/>
            <person name="Purnelle B."/>
            <person name="Masuy D."/>
            <person name="de Haan M."/>
            <person name="Maarse A.C."/>
            <person name="Alcaraz J.-P."/>
            <person name="Cottet A."/>
            <person name="Casacuberta E."/>
            <person name="Monfort A."/>
            <person name="Argiriou A."/>
            <person name="Flores M."/>
            <person name="Liguori R."/>
            <person name="Vitale D."/>
            <person name="Mannhaupt G."/>
            <person name="Haase D."/>
            <person name="Schoof H."/>
            <person name="Rudd S."/>
            <person name="Zaccaria P."/>
            <person name="Mewes H.-W."/>
            <person name="Mayer K.F.X."/>
            <person name="Kaul S."/>
            <person name="Town C.D."/>
            <person name="Koo H.L."/>
            <person name="Tallon L.J."/>
            <person name="Jenkins J."/>
            <person name="Rooney T."/>
            <person name="Rizzo M."/>
            <person name="Walts A."/>
            <person name="Utterback T."/>
            <person name="Fujii C.Y."/>
            <person name="Shea T.P."/>
            <person name="Creasy T.H."/>
            <person name="Haas B."/>
            <person name="Maiti R."/>
            <person name="Wu D."/>
            <person name="Peterson J."/>
            <person name="Van Aken S."/>
            <person name="Pai G."/>
            <person name="Militscher J."/>
            <person name="Sellers P."/>
            <person name="Gill J.E."/>
            <person name="Feldblyum T.V."/>
            <person name="Preuss D."/>
            <person name="Lin X."/>
            <person name="Nierman W.C."/>
            <person name="Salzberg S.L."/>
            <person name="White O."/>
            <person name="Venter J.C."/>
            <person name="Fraser C.M."/>
            <person name="Kaneko T."/>
            <person name="Nakamura Y."/>
            <person name="Sato S."/>
            <person name="Kato T."/>
            <person name="Asamizu E."/>
            <person name="Sasamoto S."/>
            <person name="Kimura T."/>
            <person name="Idesawa K."/>
            <person name="Kawashima K."/>
            <person name="Kishida Y."/>
            <person name="Kiyokawa C."/>
            <person name="Kohara M."/>
            <person name="Matsumoto M."/>
            <person name="Matsuno A."/>
            <person name="Muraki A."/>
            <person name="Nakayama S."/>
            <person name="Nakazaki N."/>
            <person name="Shinpo S."/>
            <person name="Takeuchi C."/>
            <person name="Wada T."/>
            <person name="Watanabe A."/>
            <person name="Yamada M."/>
            <person name="Yasuda M."/>
            <person name="Tabata S."/>
        </authorList>
    </citation>
    <scope>NUCLEOTIDE SEQUENCE [LARGE SCALE GENOMIC DNA]</scope>
    <source>
        <strain>cv. Columbia</strain>
    </source>
</reference>
<reference key="3">
    <citation type="journal article" date="2017" name="Plant J.">
        <title>Araport11: a complete reannotation of the Arabidopsis thaliana reference genome.</title>
        <authorList>
            <person name="Cheng C.Y."/>
            <person name="Krishnakumar V."/>
            <person name="Chan A.P."/>
            <person name="Thibaud-Nissen F."/>
            <person name="Schobel S."/>
            <person name="Town C.D."/>
        </authorList>
    </citation>
    <scope>GENOME REANNOTATION</scope>
    <source>
        <strain>cv. Columbia</strain>
    </source>
</reference>
<reference key="4">
    <citation type="journal article" date="2003" name="Science">
        <title>Empirical analysis of transcriptional activity in the Arabidopsis genome.</title>
        <authorList>
            <person name="Yamada K."/>
            <person name="Lim J."/>
            <person name="Dale J.M."/>
            <person name="Chen H."/>
            <person name="Shinn P."/>
            <person name="Palm C.J."/>
            <person name="Southwick A.M."/>
            <person name="Wu H.C."/>
            <person name="Kim C.J."/>
            <person name="Nguyen M."/>
            <person name="Pham P.K."/>
            <person name="Cheuk R.F."/>
            <person name="Karlin-Newmann G."/>
            <person name="Liu S.X."/>
            <person name="Lam B."/>
            <person name="Sakano H."/>
            <person name="Wu T."/>
            <person name="Yu G."/>
            <person name="Miranda M."/>
            <person name="Quach H.L."/>
            <person name="Tripp M."/>
            <person name="Chang C.H."/>
            <person name="Lee J.M."/>
            <person name="Toriumi M.J."/>
            <person name="Chan M.M."/>
            <person name="Tang C.C."/>
            <person name="Onodera C.S."/>
            <person name="Deng J.M."/>
            <person name="Akiyama K."/>
            <person name="Ansari Y."/>
            <person name="Arakawa T."/>
            <person name="Banh J."/>
            <person name="Banno F."/>
            <person name="Bowser L."/>
            <person name="Brooks S.Y."/>
            <person name="Carninci P."/>
            <person name="Chao Q."/>
            <person name="Choy N."/>
            <person name="Enju A."/>
            <person name="Goldsmith A.D."/>
            <person name="Gurjal M."/>
            <person name="Hansen N.F."/>
            <person name="Hayashizaki Y."/>
            <person name="Johnson-Hopson C."/>
            <person name="Hsuan V.W."/>
            <person name="Iida K."/>
            <person name="Karnes M."/>
            <person name="Khan S."/>
            <person name="Koesema E."/>
            <person name="Ishida J."/>
            <person name="Jiang P.X."/>
            <person name="Jones T."/>
            <person name="Kawai J."/>
            <person name="Kamiya A."/>
            <person name="Meyers C."/>
            <person name="Nakajima M."/>
            <person name="Narusaka M."/>
            <person name="Seki M."/>
            <person name="Sakurai T."/>
            <person name="Satou M."/>
            <person name="Tamse R."/>
            <person name="Vaysberg M."/>
            <person name="Wallender E.K."/>
            <person name="Wong C."/>
            <person name="Yamamura Y."/>
            <person name="Yuan S."/>
            <person name="Shinozaki K."/>
            <person name="Davis R.W."/>
            <person name="Theologis A."/>
            <person name="Ecker J.R."/>
        </authorList>
    </citation>
    <scope>NUCLEOTIDE SEQUENCE [LARGE SCALE MRNA]</scope>
    <source>
        <strain>cv. Columbia</strain>
    </source>
</reference>
<reference key="5">
    <citation type="submission" date="2006-07" db="EMBL/GenBank/DDBJ databases">
        <title>Large-scale analysis of RIKEN Arabidopsis full-length (RAFL) cDNAs.</title>
        <authorList>
            <person name="Totoki Y."/>
            <person name="Seki M."/>
            <person name="Ishida J."/>
            <person name="Nakajima M."/>
            <person name="Enju A."/>
            <person name="Kamiya A."/>
            <person name="Narusaka M."/>
            <person name="Shin-i T."/>
            <person name="Nakagawa M."/>
            <person name="Sakamoto N."/>
            <person name="Oishi K."/>
            <person name="Kohara Y."/>
            <person name="Kobayashi M."/>
            <person name="Toyoda A."/>
            <person name="Sakaki Y."/>
            <person name="Sakurai T."/>
            <person name="Iida K."/>
            <person name="Akiyama K."/>
            <person name="Satou M."/>
            <person name="Toyoda T."/>
            <person name="Konagaya A."/>
            <person name="Carninci P."/>
            <person name="Kawai J."/>
            <person name="Hayashizaki Y."/>
            <person name="Shinozaki K."/>
        </authorList>
    </citation>
    <scope>NUCLEOTIDE SEQUENCE [LARGE SCALE MRNA]</scope>
    <source>
        <strain>cv. Columbia</strain>
    </source>
</reference>
<reference key="6">
    <citation type="journal article" date="2001" name="Plant Physiol.">
        <title>ANT1, an aromatic and neutral amino acid transporter in Arabidopsis.</title>
        <authorList>
            <person name="Chen L."/>
            <person name="Ortiz-Lopez A."/>
            <person name="Jung A."/>
            <person name="Bush D.R."/>
        </authorList>
    </citation>
    <scope>FUNCTION</scope>
    <scope>BIOPHYSICOCHEMICAL PROPERTIES</scope>
    <scope>TOPOLOGY</scope>
    <scope>TISSUE SPECIFICITY</scope>
</reference>
<reference key="7">
    <citation type="journal article" date="2017" name="FEBS Lett.">
        <title>Functional identification of AtAVT3, a family of vacuolar amino acid transporters, in Arabidopsis.</title>
        <authorList>
            <person name="Fujiki Y."/>
            <person name="Teshima H."/>
            <person name="Kashiwao S."/>
            <person name="Kawano-Kawada M."/>
            <person name="Ohsumi Y."/>
            <person name="Kakinuma Y."/>
            <person name="Sekito T."/>
        </authorList>
    </citation>
    <scope>GENE FAMILY</scope>
    <scope>NOMENCLATURE</scope>
    <scope>SUBCELLULAR LOCATION</scope>
    <scope>TISSUE SPECIFICITY</scope>
</reference>